<gene>
    <name evidence="1" type="primary">mnmA</name>
    <name type="synonym">trmU</name>
    <name type="ordered locus">ASA_1391</name>
</gene>
<proteinExistence type="inferred from homology"/>
<evidence type="ECO:0000255" key="1">
    <source>
        <dbReference type="HAMAP-Rule" id="MF_00144"/>
    </source>
</evidence>
<keyword id="KW-0067">ATP-binding</keyword>
<keyword id="KW-0963">Cytoplasm</keyword>
<keyword id="KW-1015">Disulfide bond</keyword>
<keyword id="KW-0547">Nucleotide-binding</keyword>
<keyword id="KW-0694">RNA-binding</keyword>
<keyword id="KW-0808">Transferase</keyword>
<keyword id="KW-0819">tRNA processing</keyword>
<keyword id="KW-0820">tRNA-binding</keyword>
<dbReference type="EC" id="2.8.1.13" evidence="1"/>
<dbReference type="EMBL" id="CP000644">
    <property type="protein sequence ID" value="ABO89492.1"/>
    <property type="molecule type" value="Genomic_DNA"/>
</dbReference>
<dbReference type="RefSeq" id="WP_005319178.1">
    <property type="nucleotide sequence ID" value="NC_009348.1"/>
</dbReference>
<dbReference type="SMR" id="A4SKS0"/>
<dbReference type="STRING" id="29491.GCA_000820065_03307"/>
<dbReference type="GeneID" id="79879041"/>
<dbReference type="KEGG" id="asa:ASA_1391"/>
<dbReference type="eggNOG" id="COG0482">
    <property type="taxonomic scope" value="Bacteria"/>
</dbReference>
<dbReference type="HOGENOM" id="CLU_035188_1_0_6"/>
<dbReference type="Proteomes" id="UP000000225">
    <property type="component" value="Chromosome"/>
</dbReference>
<dbReference type="GO" id="GO:0005737">
    <property type="term" value="C:cytoplasm"/>
    <property type="evidence" value="ECO:0007669"/>
    <property type="project" value="UniProtKB-SubCell"/>
</dbReference>
<dbReference type="GO" id="GO:0005524">
    <property type="term" value="F:ATP binding"/>
    <property type="evidence" value="ECO:0007669"/>
    <property type="project" value="UniProtKB-KW"/>
</dbReference>
<dbReference type="GO" id="GO:0000049">
    <property type="term" value="F:tRNA binding"/>
    <property type="evidence" value="ECO:0007669"/>
    <property type="project" value="UniProtKB-KW"/>
</dbReference>
<dbReference type="GO" id="GO:0103016">
    <property type="term" value="F:tRNA-uridine 2-sulfurtransferase activity"/>
    <property type="evidence" value="ECO:0007669"/>
    <property type="project" value="UniProtKB-EC"/>
</dbReference>
<dbReference type="GO" id="GO:0002143">
    <property type="term" value="P:tRNA wobble position uridine thiolation"/>
    <property type="evidence" value="ECO:0007669"/>
    <property type="project" value="TreeGrafter"/>
</dbReference>
<dbReference type="CDD" id="cd01998">
    <property type="entry name" value="MnmA_TRMU-like"/>
    <property type="match status" value="1"/>
</dbReference>
<dbReference type="FunFam" id="2.30.30.280:FF:000001">
    <property type="entry name" value="tRNA-specific 2-thiouridylase MnmA"/>
    <property type="match status" value="1"/>
</dbReference>
<dbReference type="FunFam" id="2.40.30.10:FF:000023">
    <property type="entry name" value="tRNA-specific 2-thiouridylase MnmA"/>
    <property type="match status" value="1"/>
</dbReference>
<dbReference type="FunFam" id="3.40.50.620:FF:000004">
    <property type="entry name" value="tRNA-specific 2-thiouridylase MnmA"/>
    <property type="match status" value="1"/>
</dbReference>
<dbReference type="Gene3D" id="2.30.30.280">
    <property type="entry name" value="Adenine nucleotide alpha hydrolases-like domains"/>
    <property type="match status" value="1"/>
</dbReference>
<dbReference type="Gene3D" id="3.40.50.620">
    <property type="entry name" value="HUPs"/>
    <property type="match status" value="1"/>
</dbReference>
<dbReference type="Gene3D" id="2.40.30.10">
    <property type="entry name" value="Translation factors"/>
    <property type="match status" value="1"/>
</dbReference>
<dbReference type="HAMAP" id="MF_00144">
    <property type="entry name" value="tRNA_thiouridyl_MnmA"/>
    <property type="match status" value="1"/>
</dbReference>
<dbReference type="InterPro" id="IPR004506">
    <property type="entry name" value="MnmA-like"/>
</dbReference>
<dbReference type="InterPro" id="IPR046885">
    <property type="entry name" value="MnmA-like_C"/>
</dbReference>
<dbReference type="InterPro" id="IPR046884">
    <property type="entry name" value="MnmA-like_central"/>
</dbReference>
<dbReference type="InterPro" id="IPR023382">
    <property type="entry name" value="MnmA-like_central_sf"/>
</dbReference>
<dbReference type="InterPro" id="IPR014729">
    <property type="entry name" value="Rossmann-like_a/b/a_fold"/>
</dbReference>
<dbReference type="NCBIfam" id="NF001138">
    <property type="entry name" value="PRK00143.1"/>
    <property type="match status" value="1"/>
</dbReference>
<dbReference type="NCBIfam" id="TIGR00420">
    <property type="entry name" value="trmU"/>
    <property type="match status" value="1"/>
</dbReference>
<dbReference type="PANTHER" id="PTHR11933:SF5">
    <property type="entry name" value="MITOCHONDRIAL TRNA-SPECIFIC 2-THIOURIDYLASE 1"/>
    <property type="match status" value="1"/>
</dbReference>
<dbReference type="PANTHER" id="PTHR11933">
    <property type="entry name" value="TRNA 5-METHYLAMINOMETHYL-2-THIOURIDYLATE -METHYLTRANSFERASE"/>
    <property type="match status" value="1"/>
</dbReference>
<dbReference type="Pfam" id="PF03054">
    <property type="entry name" value="tRNA_Me_trans"/>
    <property type="match status" value="1"/>
</dbReference>
<dbReference type="Pfam" id="PF20258">
    <property type="entry name" value="tRNA_Me_trans_C"/>
    <property type="match status" value="1"/>
</dbReference>
<dbReference type="Pfam" id="PF20259">
    <property type="entry name" value="tRNA_Me_trans_M"/>
    <property type="match status" value="1"/>
</dbReference>
<dbReference type="SUPFAM" id="SSF52402">
    <property type="entry name" value="Adenine nucleotide alpha hydrolases-like"/>
    <property type="match status" value="1"/>
</dbReference>
<name>MNMA_AERS4</name>
<reference key="1">
    <citation type="journal article" date="2008" name="BMC Genomics">
        <title>The genome of Aeromonas salmonicida subsp. salmonicida A449: insights into the evolution of a fish pathogen.</title>
        <authorList>
            <person name="Reith M.E."/>
            <person name="Singh R.K."/>
            <person name="Curtis B."/>
            <person name="Boyd J.M."/>
            <person name="Bouevitch A."/>
            <person name="Kimball J."/>
            <person name="Munholland J."/>
            <person name="Murphy C."/>
            <person name="Sarty D."/>
            <person name="Williams J."/>
            <person name="Nash J.H."/>
            <person name="Johnson S.C."/>
            <person name="Brown L.L."/>
        </authorList>
    </citation>
    <scope>NUCLEOTIDE SEQUENCE [LARGE SCALE GENOMIC DNA]</scope>
    <source>
        <strain>A449</strain>
    </source>
</reference>
<accession>A4SKS0</accession>
<protein>
    <recommendedName>
        <fullName evidence="1">tRNA-specific 2-thiouridylase MnmA</fullName>
        <ecNumber evidence="1">2.8.1.13</ecNumber>
    </recommendedName>
</protein>
<comment type="function">
    <text evidence="1">Catalyzes the 2-thiolation of uridine at the wobble position (U34) of tRNA, leading to the formation of s(2)U34.</text>
</comment>
<comment type="catalytic activity">
    <reaction evidence="1">
        <text>S-sulfanyl-L-cysteinyl-[protein] + uridine(34) in tRNA + AH2 + ATP = 2-thiouridine(34) in tRNA + L-cysteinyl-[protein] + A + AMP + diphosphate + H(+)</text>
        <dbReference type="Rhea" id="RHEA:47032"/>
        <dbReference type="Rhea" id="RHEA-COMP:10131"/>
        <dbReference type="Rhea" id="RHEA-COMP:11726"/>
        <dbReference type="Rhea" id="RHEA-COMP:11727"/>
        <dbReference type="Rhea" id="RHEA-COMP:11728"/>
        <dbReference type="ChEBI" id="CHEBI:13193"/>
        <dbReference type="ChEBI" id="CHEBI:15378"/>
        <dbReference type="ChEBI" id="CHEBI:17499"/>
        <dbReference type="ChEBI" id="CHEBI:29950"/>
        <dbReference type="ChEBI" id="CHEBI:30616"/>
        <dbReference type="ChEBI" id="CHEBI:33019"/>
        <dbReference type="ChEBI" id="CHEBI:61963"/>
        <dbReference type="ChEBI" id="CHEBI:65315"/>
        <dbReference type="ChEBI" id="CHEBI:87170"/>
        <dbReference type="ChEBI" id="CHEBI:456215"/>
        <dbReference type="EC" id="2.8.1.13"/>
    </reaction>
</comment>
<comment type="subcellular location">
    <subcellularLocation>
        <location evidence="1">Cytoplasm</location>
    </subcellularLocation>
</comment>
<comment type="similarity">
    <text evidence="1">Belongs to the MnmA/TRMU family.</text>
</comment>
<organism>
    <name type="scientific">Aeromonas salmonicida (strain A449)</name>
    <dbReference type="NCBI Taxonomy" id="382245"/>
    <lineage>
        <taxon>Bacteria</taxon>
        <taxon>Pseudomonadati</taxon>
        <taxon>Pseudomonadota</taxon>
        <taxon>Gammaproteobacteria</taxon>
        <taxon>Aeromonadales</taxon>
        <taxon>Aeromonadaceae</taxon>
        <taxon>Aeromonas</taxon>
    </lineage>
</organism>
<sequence length="368" mass="41422">MTDNSQIKVIVGMSGGVDSSVSAYLLQQQGYQVEGLFMKNWEEDDTDEYCSASQDLADAKAVCDKLGMKLHTINFAAEYWDNVFEHFLEEYKAGRTPNPDILCNKEIKFKAFLEFAAEELGATYIATGHYVRRDDSTGHPRLLRGLDSNKDQSYFLYTLSEKQVGQSLFPVGDLEKPEVRRIAEQLDLITAKKKDSTGICFIGERKFKDFLAKFLPAQPGPIETVDGKVIGEHQGLMYHTLGQRKGLGIGGRKDATEEAWYVVDKEVERNTLVVAQGEHPRLYSDGLIASQLHWVDRTPIRAPRRCTVKTRYRQQDIPCLIQPIDDETIRVIFDEKQAAVTPGQSAVFYDGEVCLGGGIIEQRFSHPV</sequence>
<feature type="chain" id="PRO_1000009504" description="tRNA-specific 2-thiouridylase MnmA">
    <location>
        <begin position="1"/>
        <end position="368"/>
    </location>
</feature>
<feature type="region of interest" description="Interaction with target base in tRNA" evidence="1">
    <location>
        <begin position="98"/>
        <end position="100"/>
    </location>
</feature>
<feature type="region of interest" description="Interaction with tRNA" evidence="1">
    <location>
        <begin position="150"/>
        <end position="152"/>
    </location>
</feature>
<feature type="region of interest" description="Interaction with tRNA" evidence="1">
    <location>
        <begin position="311"/>
        <end position="312"/>
    </location>
</feature>
<feature type="active site" description="Nucleophile" evidence="1">
    <location>
        <position position="103"/>
    </location>
</feature>
<feature type="active site" description="Cysteine persulfide intermediate" evidence="1">
    <location>
        <position position="200"/>
    </location>
</feature>
<feature type="binding site" evidence="1">
    <location>
        <begin position="12"/>
        <end position="19"/>
    </location>
    <ligand>
        <name>ATP</name>
        <dbReference type="ChEBI" id="CHEBI:30616"/>
    </ligand>
</feature>
<feature type="binding site" evidence="1">
    <location>
        <position position="38"/>
    </location>
    <ligand>
        <name>ATP</name>
        <dbReference type="ChEBI" id="CHEBI:30616"/>
    </ligand>
</feature>
<feature type="binding site" evidence="1">
    <location>
        <position position="128"/>
    </location>
    <ligand>
        <name>ATP</name>
        <dbReference type="ChEBI" id="CHEBI:30616"/>
    </ligand>
</feature>
<feature type="site" description="Interaction with tRNA" evidence="1">
    <location>
        <position position="129"/>
    </location>
</feature>
<feature type="site" description="Interaction with tRNA" evidence="1">
    <location>
        <position position="344"/>
    </location>
</feature>
<feature type="disulfide bond" description="Alternate" evidence="1">
    <location>
        <begin position="103"/>
        <end position="200"/>
    </location>
</feature>